<sequence>MTTIKTSNLGFPRLGRKREWKKAIESYWAKKISKEELDQTLTDLHKENLLLQKYYHLDSIPVGDFSLYDHILDTSLLFNIIPERFQGRTIDDDLLFDIARGNKDHVASALIKWFNTNYHYIVPEWDNVEPKVSRNVLLDRFKYAQSLNVNAHPVIVGPITFVKLSKGGHQTFEEKVKTLLPLYKEVFESLIDAGAEYIQVDEPILVTDDSESYENITREAYDYFEKAGVAKKLVIQTYFERAHLKFLSSLPVGGIGLDFVHDNGYNLKQIEAGDFDKSKTLYAGIIDGRNVWASDIEAKKVLIDKLLAHTNELVIQPSSSLLHVPVSLDDETLDTSVGEGLSFATEKLDELDALRRLFNQNDSVKYDKLKARYERFQNQSFKNLDYDFESVRTSRQSPFAQRIEQQQKRLNLPDLPTTTIGSFPQSREVRKYRADWKNKRITDEAYETFLKNEIARWIKIQEDIGLDVLVHGEFERNDMVEFFGEKLQGFLVTKFGWVQSYGSRAVKPPIIYGDVKWTAPLTVDETVYAQSLTDKPVKGMLTGPVTILNWSFERVDLPRKVVQDQIALAINEEVLALEAAGIKVIQVDEPALREGLPLRSEYHEQYLKDAVLSFKLATSSVRDETQIHTHMCYSQFGQIIHAIHDLDADVISIETSRSHGDLIKDFEDINYDLGIGLGVYDIHSPRIPTKEEITTAINRSLQQIDRSLFWVNPDCGLKTRKEEEVKDALTVLVNAVKAKRQE</sequence>
<feature type="chain" id="PRO_0000098658" description="5-methyltetrahydropteroyltriglutamate--homocysteine methyltransferase">
    <location>
        <begin position="1"/>
        <end position="742"/>
    </location>
</feature>
<feature type="active site" description="Proton donor" evidence="1">
    <location>
        <position position="683"/>
    </location>
</feature>
<feature type="binding site" evidence="1">
    <location>
        <begin position="18"/>
        <end position="21"/>
    </location>
    <ligand>
        <name>5-methyltetrahydropteroyltri-L-glutamate</name>
        <dbReference type="ChEBI" id="CHEBI:58207"/>
    </ligand>
</feature>
<feature type="binding site" evidence="1">
    <location>
        <position position="112"/>
    </location>
    <ligand>
        <name>5-methyltetrahydropteroyltri-L-glutamate</name>
        <dbReference type="ChEBI" id="CHEBI:58207"/>
    </ligand>
</feature>
<feature type="binding site" evidence="1">
    <location>
        <begin position="420"/>
        <end position="422"/>
    </location>
    <ligand>
        <name>L-homocysteine</name>
        <dbReference type="ChEBI" id="CHEBI:58199"/>
    </ligand>
</feature>
<feature type="binding site" evidence="1">
    <location>
        <begin position="420"/>
        <end position="422"/>
    </location>
    <ligand>
        <name>L-methionine</name>
        <dbReference type="ChEBI" id="CHEBI:57844"/>
    </ligand>
</feature>
<feature type="binding site" evidence="1">
    <location>
        <position position="473"/>
    </location>
    <ligand>
        <name>L-homocysteine</name>
        <dbReference type="ChEBI" id="CHEBI:58199"/>
    </ligand>
</feature>
<feature type="binding site" evidence="1">
    <location>
        <position position="473"/>
    </location>
    <ligand>
        <name>L-methionine</name>
        <dbReference type="ChEBI" id="CHEBI:57844"/>
    </ligand>
</feature>
<feature type="binding site" evidence="1">
    <location>
        <position position="550"/>
    </location>
    <ligand>
        <name>5-methyltetrahydropteroyltri-L-glutamate</name>
        <dbReference type="ChEBI" id="CHEBI:58207"/>
    </ligand>
</feature>
<feature type="binding site" evidence="1">
    <location>
        <position position="588"/>
    </location>
    <ligand>
        <name>L-homocysteine</name>
        <dbReference type="ChEBI" id="CHEBI:58199"/>
    </ligand>
</feature>
<feature type="binding site" evidence="1">
    <location>
        <position position="588"/>
    </location>
    <ligand>
        <name>L-methionine</name>
        <dbReference type="ChEBI" id="CHEBI:57844"/>
    </ligand>
</feature>
<feature type="binding site" evidence="1">
    <location>
        <position position="594"/>
    </location>
    <ligand>
        <name>5-methyltetrahydropteroyltri-L-glutamate</name>
        <dbReference type="ChEBI" id="CHEBI:58207"/>
    </ligand>
</feature>
<feature type="binding site" evidence="1">
    <location>
        <position position="630"/>
    </location>
    <ligand>
        <name>Zn(2+)</name>
        <dbReference type="ChEBI" id="CHEBI:29105"/>
        <note>catalytic</note>
    </ligand>
</feature>
<feature type="binding site" evidence="1">
    <location>
        <position position="632"/>
    </location>
    <ligand>
        <name>Zn(2+)</name>
        <dbReference type="ChEBI" id="CHEBI:29105"/>
        <note>catalytic</note>
    </ligand>
</feature>
<feature type="binding site" evidence="1">
    <location>
        <position position="654"/>
    </location>
    <ligand>
        <name>Zn(2+)</name>
        <dbReference type="ChEBI" id="CHEBI:29105"/>
        <note>catalytic</note>
    </ligand>
</feature>
<feature type="binding site" evidence="1">
    <location>
        <position position="715"/>
    </location>
    <ligand>
        <name>Zn(2+)</name>
        <dbReference type="ChEBI" id="CHEBI:29105"/>
        <note>catalytic</note>
    </ligand>
</feature>
<accession>Q5HIT8</accession>
<proteinExistence type="inferred from homology"/>
<name>METE_STAAC</name>
<reference key="1">
    <citation type="journal article" date="2005" name="J. Bacteriol.">
        <title>Insights on evolution of virulence and resistance from the complete genome analysis of an early methicillin-resistant Staphylococcus aureus strain and a biofilm-producing methicillin-resistant Staphylococcus epidermidis strain.</title>
        <authorList>
            <person name="Gill S.R."/>
            <person name="Fouts D.E."/>
            <person name="Archer G.L."/>
            <person name="Mongodin E.F."/>
            <person name="DeBoy R.T."/>
            <person name="Ravel J."/>
            <person name="Paulsen I.T."/>
            <person name="Kolonay J.F."/>
            <person name="Brinkac L.M."/>
            <person name="Beanan M.J."/>
            <person name="Dodson R.J."/>
            <person name="Daugherty S.C."/>
            <person name="Madupu R."/>
            <person name="Angiuoli S.V."/>
            <person name="Durkin A.S."/>
            <person name="Haft D.H."/>
            <person name="Vamathevan J.J."/>
            <person name="Khouri H."/>
            <person name="Utterback T.R."/>
            <person name="Lee C."/>
            <person name="Dimitrov G."/>
            <person name="Jiang L."/>
            <person name="Qin H."/>
            <person name="Weidman J."/>
            <person name="Tran K."/>
            <person name="Kang K.H."/>
            <person name="Hance I.R."/>
            <person name="Nelson K.E."/>
            <person name="Fraser C.M."/>
        </authorList>
    </citation>
    <scope>NUCLEOTIDE SEQUENCE [LARGE SCALE GENOMIC DNA]</scope>
    <source>
        <strain>COL</strain>
    </source>
</reference>
<dbReference type="EC" id="2.1.1.14" evidence="1"/>
<dbReference type="EMBL" id="CP000046">
    <property type="protein sequence ID" value="AAW38896.1"/>
    <property type="molecule type" value="Genomic_DNA"/>
</dbReference>
<dbReference type="RefSeq" id="WP_000207614.1">
    <property type="nucleotide sequence ID" value="NZ_JBGOFO010000001.1"/>
</dbReference>
<dbReference type="SMR" id="Q5HIT8"/>
<dbReference type="KEGG" id="sac:SACOL0428"/>
<dbReference type="HOGENOM" id="CLU_013175_0_0_9"/>
<dbReference type="UniPathway" id="UPA00051">
    <property type="reaction ID" value="UER00082"/>
</dbReference>
<dbReference type="Proteomes" id="UP000000530">
    <property type="component" value="Chromosome"/>
</dbReference>
<dbReference type="GO" id="GO:0003871">
    <property type="term" value="F:5-methyltetrahydropteroyltriglutamate-homocysteine S-methyltransferase activity"/>
    <property type="evidence" value="ECO:0007669"/>
    <property type="project" value="UniProtKB-UniRule"/>
</dbReference>
<dbReference type="GO" id="GO:0008270">
    <property type="term" value="F:zinc ion binding"/>
    <property type="evidence" value="ECO:0007669"/>
    <property type="project" value="InterPro"/>
</dbReference>
<dbReference type="GO" id="GO:0009086">
    <property type="term" value="P:methionine biosynthetic process"/>
    <property type="evidence" value="ECO:0007669"/>
    <property type="project" value="UniProtKB-UniRule"/>
</dbReference>
<dbReference type="GO" id="GO:0032259">
    <property type="term" value="P:methylation"/>
    <property type="evidence" value="ECO:0007669"/>
    <property type="project" value="UniProtKB-KW"/>
</dbReference>
<dbReference type="CDD" id="cd03311">
    <property type="entry name" value="CIMS_C_terminal_like"/>
    <property type="match status" value="1"/>
</dbReference>
<dbReference type="CDD" id="cd03312">
    <property type="entry name" value="CIMS_N_terminal_like"/>
    <property type="match status" value="1"/>
</dbReference>
<dbReference type="Gene3D" id="3.20.20.210">
    <property type="match status" value="2"/>
</dbReference>
<dbReference type="HAMAP" id="MF_00172">
    <property type="entry name" value="Meth_synth"/>
    <property type="match status" value="1"/>
</dbReference>
<dbReference type="InterPro" id="IPR013215">
    <property type="entry name" value="Cbl-indep_Met_Synth_N"/>
</dbReference>
<dbReference type="InterPro" id="IPR006276">
    <property type="entry name" value="Cobalamin-indep_Met_synthase"/>
</dbReference>
<dbReference type="InterPro" id="IPR002629">
    <property type="entry name" value="Met_Synth_C/arc"/>
</dbReference>
<dbReference type="InterPro" id="IPR038071">
    <property type="entry name" value="UROD/MetE-like_sf"/>
</dbReference>
<dbReference type="NCBIfam" id="TIGR01371">
    <property type="entry name" value="met_syn_B12ind"/>
    <property type="match status" value="1"/>
</dbReference>
<dbReference type="NCBIfam" id="NF003556">
    <property type="entry name" value="PRK05222.1"/>
    <property type="match status" value="1"/>
</dbReference>
<dbReference type="PANTHER" id="PTHR30519">
    <property type="entry name" value="5-METHYLTETRAHYDROPTEROYLTRIGLUTAMATE--HOMOCYSTEINE METHYLTRANSFERASE"/>
    <property type="match status" value="1"/>
</dbReference>
<dbReference type="Pfam" id="PF08267">
    <property type="entry name" value="Meth_synt_1"/>
    <property type="match status" value="1"/>
</dbReference>
<dbReference type="Pfam" id="PF01717">
    <property type="entry name" value="Meth_synt_2"/>
    <property type="match status" value="1"/>
</dbReference>
<dbReference type="PIRSF" id="PIRSF000382">
    <property type="entry name" value="MeTrfase_B12_ind"/>
    <property type="match status" value="1"/>
</dbReference>
<dbReference type="SUPFAM" id="SSF51726">
    <property type="entry name" value="UROD/MetE-like"/>
    <property type="match status" value="2"/>
</dbReference>
<evidence type="ECO:0000255" key="1">
    <source>
        <dbReference type="HAMAP-Rule" id="MF_00172"/>
    </source>
</evidence>
<comment type="function">
    <text evidence="1">Catalyzes the transfer of a methyl group from 5-methyltetrahydrofolate to homocysteine resulting in methionine formation.</text>
</comment>
<comment type="catalytic activity">
    <reaction evidence="1">
        <text>5-methyltetrahydropteroyltri-L-glutamate + L-homocysteine = tetrahydropteroyltri-L-glutamate + L-methionine</text>
        <dbReference type="Rhea" id="RHEA:21196"/>
        <dbReference type="ChEBI" id="CHEBI:57844"/>
        <dbReference type="ChEBI" id="CHEBI:58140"/>
        <dbReference type="ChEBI" id="CHEBI:58199"/>
        <dbReference type="ChEBI" id="CHEBI:58207"/>
        <dbReference type="EC" id="2.1.1.14"/>
    </reaction>
</comment>
<comment type="cofactor">
    <cofactor evidence="1">
        <name>Zn(2+)</name>
        <dbReference type="ChEBI" id="CHEBI:29105"/>
    </cofactor>
    <text evidence="1">Binds 1 zinc ion per subunit.</text>
</comment>
<comment type="pathway">
    <text evidence="1">Amino-acid biosynthesis; L-methionine biosynthesis via de novo pathway; L-methionine from L-homocysteine (MetE route): step 1/1.</text>
</comment>
<comment type="similarity">
    <text evidence="1">Belongs to the vitamin-B12 independent methionine synthase family.</text>
</comment>
<protein>
    <recommendedName>
        <fullName evidence="1">5-methyltetrahydropteroyltriglutamate--homocysteine methyltransferase</fullName>
        <ecNumber evidence="1">2.1.1.14</ecNumber>
    </recommendedName>
    <alternativeName>
        <fullName evidence="1">Cobalamin-independent methionine synthase</fullName>
    </alternativeName>
    <alternativeName>
        <fullName evidence="1">Methionine synthase, vitamin-B12 independent isozyme</fullName>
    </alternativeName>
</protein>
<gene>
    <name evidence="1" type="primary">metE</name>
    <name type="ordered locus">SACOL0428</name>
</gene>
<keyword id="KW-0028">Amino-acid biosynthesis</keyword>
<keyword id="KW-0479">Metal-binding</keyword>
<keyword id="KW-0486">Methionine biosynthesis</keyword>
<keyword id="KW-0489">Methyltransferase</keyword>
<keyword id="KW-0677">Repeat</keyword>
<keyword id="KW-0808">Transferase</keyword>
<keyword id="KW-0862">Zinc</keyword>
<organism>
    <name type="scientific">Staphylococcus aureus (strain COL)</name>
    <dbReference type="NCBI Taxonomy" id="93062"/>
    <lineage>
        <taxon>Bacteria</taxon>
        <taxon>Bacillati</taxon>
        <taxon>Bacillota</taxon>
        <taxon>Bacilli</taxon>
        <taxon>Bacillales</taxon>
        <taxon>Staphylococcaceae</taxon>
        <taxon>Staphylococcus</taxon>
    </lineage>
</organism>